<organism>
    <name type="scientific">Burkholderia cenocepacia (strain ATCC BAA-245 / DSM 16553 / LMG 16656 / NCTC 13227 / J2315 / CF5610)</name>
    <name type="common">Burkholderia cepacia (strain J2315)</name>
    <dbReference type="NCBI Taxonomy" id="216591"/>
    <lineage>
        <taxon>Bacteria</taxon>
        <taxon>Pseudomonadati</taxon>
        <taxon>Pseudomonadota</taxon>
        <taxon>Betaproteobacteria</taxon>
        <taxon>Burkholderiales</taxon>
        <taxon>Burkholderiaceae</taxon>
        <taxon>Burkholderia</taxon>
        <taxon>Burkholderia cepacia complex</taxon>
    </lineage>
</organism>
<comment type="function">
    <text evidence="1">F(1)F(0) ATP synthase produces ATP from ADP in the presence of a proton or sodium gradient. F-type ATPases consist of two structural domains, F(1) containing the extramembraneous catalytic core and F(0) containing the membrane proton channel, linked together by a central stalk and a peripheral stalk. During catalysis, ATP synthesis in the catalytic domain of F(1) is coupled via a rotary mechanism of the central stalk subunits to proton translocation.</text>
</comment>
<comment type="function">
    <text evidence="1">This protein is part of the stalk that links CF(0) to CF(1). It either transmits conformational changes from CF(0) to CF(1) or is implicated in proton conduction.</text>
</comment>
<comment type="subunit">
    <text evidence="1">F-type ATPases have 2 components, F(1) - the catalytic core - and F(0) - the membrane proton channel. F(1) has five subunits: alpha(3), beta(3), gamma(1), delta(1), epsilon(1). F(0) has three main subunits: a(1), b(2) and c(10-14). The alpha and beta chains form an alternating ring which encloses part of the gamma chain. F(1) is attached to F(0) by a central stalk formed by the gamma and epsilon chains, while a peripheral stalk is formed by the delta and b chains.</text>
</comment>
<comment type="subcellular location">
    <subcellularLocation>
        <location evidence="1">Cell inner membrane</location>
        <topology evidence="1">Peripheral membrane protein</topology>
    </subcellularLocation>
</comment>
<comment type="similarity">
    <text evidence="1">Belongs to the ATPase delta chain family.</text>
</comment>
<name>ATPD_BURCJ</name>
<sequence length="179" mass="18977">MAELATIARPYAEALFRVAEGGDIAAWSTLVQELAQVARLPEVLSVASSPKVTRTQVAELLLAAAKSPLAAGAEAKNFVQMLVDNHRIALLPEIAEQFEALKNEREGAADAEIVSAFPLNGADLDSLVSGLERKFKRKLKPTVEVDSSLIGGVRVTVGDEVLDTSVRARLASMQAALTA</sequence>
<feature type="chain" id="PRO_0000370920" description="ATP synthase subunit delta">
    <location>
        <begin position="1"/>
        <end position="179"/>
    </location>
</feature>
<gene>
    <name evidence="1" type="primary">atpH</name>
    <name type="ordered locus">BceJ2315_00330</name>
    <name type="ORF">BCAL0033</name>
</gene>
<reference key="1">
    <citation type="journal article" date="2009" name="J. Bacteriol.">
        <title>The genome of Burkholderia cenocepacia J2315, an epidemic pathogen of cystic fibrosis patients.</title>
        <authorList>
            <person name="Holden M.T."/>
            <person name="Seth-Smith H.M."/>
            <person name="Crossman L.C."/>
            <person name="Sebaihia M."/>
            <person name="Bentley S.D."/>
            <person name="Cerdeno-Tarraga A.M."/>
            <person name="Thomson N.R."/>
            <person name="Bason N."/>
            <person name="Quail M.A."/>
            <person name="Sharp S."/>
            <person name="Cherevach I."/>
            <person name="Churcher C."/>
            <person name="Goodhead I."/>
            <person name="Hauser H."/>
            <person name="Holroyd N."/>
            <person name="Mungall K."/>
            <person name="Scott P."/>
            <person name="Walker D."/>
            <person name="White B."/>
            <person name="Rose H."/>
            <person name="Iversen P."/>
            <person name="Mil-Homens D."/>
            <person name="Rocha E.P."/>
            <person name="Fialho A.M."/>
            <person name="Baldwin A."/>
            <person name="Dowson C."/>
            <person name="Barrell B.G."/>
            <person name="Govan J.R."/>
            <person name="Vandamme P."/>
            <person name="Hart C.A."/>
            <person name="Mahenthiralingam E."/>
            <person name="Parkhill J."/>
        </authorList>
    </citation>
    <scope>NUCLEOTIDE SEQUENCE [LARGE SCALE GENOMIC DNA]</scope>
    <source>
        <strain>ATCC BAA-245 / DSM 16553 / LMG 16656 / NCTC 13227 / J2315 / CF5610</strain>
    </source>
</reference>
<protein>
    <recommendedName>
        <fullName evidence="1">ATP synthase subunit delta</fullName>
    </recommendedName>
    <alternativeName>
        <fullName evidence="1">ATP synthase F(1) sector subunit delta</fullName>
    </alternativeName>
    <alternativeName>
        <fullName evidence="1">F-type ATPase subunit delta</fullName>
        <shortName evidence="1">F-ATPase subunit delta</shortName>
    </alternativeName>
</protein>
<evidence type="ECO:0000255" key="1">
    <source>
        <dbReference type="HAMAP-Rule" id="MF_01416"/>
    </source>
</evidence>
<accession>B4EEY6</accession>
<dbReference type="EMBL" id="AM747720">
    <property type="protein sequence ID" value="CAR50339.1"/>
    <property type="molecule type" value="Genomic_DNA"/>
</dbReference>
<dbReference type="RefSeq" id="WP_006482713.1">
    <property type="nucleotide sequence ID" value="NC_011000.1"/>
</dbReference>
<dbReference type="SMR" id="B4EEY6"/>
<dbReference type="KEGG" id="bcj:BCAL0033"/>
<dbReference type="eggNOG" id="COG0712">
    <property type="taxonomic scope" value="Bacteria"/>
</dbReference>
<dbReference type="HOGENOM" id="CLU_085114_3_0_4"/>
<dbReference type="BioCyc" id="BCEN216591:G1G1V-36-MONOMER"/>
<dbReference type="Proteomes" id="UP000001035">
    <property type="component" value="Chromosome 1"/>
</dbReference>
<dbReference type="GO" id="GO:0005886">
    <property type="term" value="C:plasma membrane"/>
    <property type="evidence" value="ECO:0007669"/>
    <property type="project" value="UniProtKB-SubCell"/>
</dbReference>
<dbReference type="GO" id="GO:0045259">
    <property type="term" value="C:proton-transporting ATP synthase complex"/>
    <property type="evidence" value="ECO:0007669"/>
    <property type="project" value="UniProtKB-KW"/>
</dbReference>
<dbReference type="GO" id="GO:0046933">
    <property type="term" value="F:proton-transporting ATP synthase activity, rotational mechanism"/>
    <property type="evidence" value="ECO:0007669"/>
    <property type="project" value="UniProtKB-UniRule"/>
</dbReference>
<dbReference type="Gene3D" id="1.10.520.20">
    <property type="entry name" value="N-terminal domain of the delta subunit of the F1F0-ATP synthase"/>
    <property type="match status" value="1"/>
</dbReference>
<dbReference type="HAMAP" id="MF_01416">
    <property type="entry name" value="ATP_synth_delta_bact"/>
    <property type="match status" value="1"/>
</dbReference>
<dbReference type="InterPro" id="IPR026015">
    <property type="entry name" value="ATP_synth_OSCP/delta_N_sf"/>
</dbReference>
<dbReference type="InterPro" id="IPR000711">
    <property type="entry name" value="ATPase_OSCP/dsu"/>
</dbReference>
<dbReference type="NCBIfam" id="TIGR01145">
    <property type="entry name" value="ATP_synt_delta"/>
    <property type="match status" value="1"/>
</dbReference>
<dbReference type="NCBIfam" id="NF004402">
    <property type="entry name" value="PRK05758.2-2"/>
    <property type="match status" value="1"/>
</dbReference>
<dbReference type="PANTHER" id="PTHR11910">
    <property type="entry name" value="ATP SYNTHASE DELTA CHAIN"/>
    <property type="match status" value="1"/>
</dbReference>
<dbReference type="Pfam" id="PF00213">
    <property type="entry name" value="OSCP"/>
    <property type="match status" value="1"/>
</dbReference>
<dbReference type="PRINTS" id="PR00125">
    <property type="entry name" value="ATPASEDELTA"/>
</dbReference>
<dbReference type="SUPFAM" id="SSF47928">
    <property type="entry name" value="N-terminal domain of the delta subunit of the F1F0-ATP synthase"/>
    <property type="match status" value="1"/>
</dbReference>
<keyword id="KW-0066">ATP synthesis</keyword>
<keyword id="KW-0997">Cell inner membrane</keyword>
<keyword id="KW-1003">Cell membrane</keyword>
<keyword id="KW-0139">CF(1)</keyword>
<keyword id="KW-0375">Hydrogen ion transport</keyword>
<keyword id="KW-0406">Ion transport</keyword>
<keyword id="KW-0472">Membrane</keyword>
<keyword id="KW-0813">Transport</keyword>
<proteinExistence type="inferred from homology"/>